<proteinExistence type="inferred from homology"/>
<evidence type="ECO:0000255" key="1">
    <source>
        <dbReference type="HAMAP-Rule" id="MF_01326"/>
    </source>
</evidence>
<evidence type="ECO:0000305" key="2"/>
<comment type="function">
    <text evidence="1">One of two assembly initiator proteins, it binds directly to the 5'-end of the 23S rRNA, where it nucleates assembly of the 50S subunit.</text>
</comment>
<comment type="function">
    <text evidence="1">One of the proteins that surrounds the polypeptide exit tunnel on the outside of the subunit.</text>
</comment>
<comment type="subunit">
    <text evidence="1">Part of the 50S ribosomal subunit.</text>
</comment>
<comment type="similarity">
    <text evidence="1">Belongs to the universal ribosomal protein uL24 family.</text>
</comment>
<name>RL24_RICBR</name>
<protein>
    <recommendedName>
        <fullName evidence="1">Large ribosomal subunit protein uL24</fullName>
    </recommendedName>
    <alternativeName>
        <fullName evidence="2">50S ribosomal protein L24</fullName>
    </alternativeName>
</protein>
<accession>Q1RHN2</accession>
<feature type="chain" id="PRO_0000241654" description="Large ribosomal subunit protein uL24">
    <location>
        <begin position="1"/>
        <end position="109"/>
    </location>
</feature>
<reference key="1">
    <citation type="journal article" date="2006" name="PLoS Genet.">
        <title>Genome sequence of Rickettsia bellii illuminates the role of amoebae in gene exchanges between intracellular pathogens.</title>
        <authorList>
            <person name="Ogata H."/>
            <person name="La Scola B."/>
            <person name="Audic S."/>
            <person name="Renesto P."/>
            <person name="Blanc G."/>
            <person name="Robert C."/>
            <person name="Fournier P.-E."/>
            <person name="Claverie J.-M."/>
            <person name="Raoult D."/>
        </authorList>
    </citation>
    <scope>NUCLEOTIDE SEQUENCE [LARGE SCALE GENOMIC DNA]</scope>
    <source>
        <strain>RML369-C</strain>
    </source>
</reference>
<gene>
    <name evidence="1" type="primary">rplX</name>
    <name type="ordered locus">RBE_1051</name>
</gene>
<sequence length="109" mass="11861">MIKLKVKKGDEVIVITGKYKGKKGKILKVFPEQNKIVVSGINLVKKHTKPTKVSEGGIITKELPIDISNVAHVDPKTGNPTKVAFKFLEDGSKVRIAKKSGEIIGKEGK</sequence>
<dbReference type="EMBL" id="CP000087">
    <property type="protein sequence ID" value="ABE05132.1"/>
    <property type="molecule type" value="Genomic_DNA"/>
</dbReference>
<dbReference type="RefSeq" id="WP_011477710.1">
    <property type="nucleotide sequence ID" value="NC_007940.1"/>
</dbReference>
<dbReference type="SMR" id="Q1RHN2"/>
<dbReference type="KEGG" id="rbe:RBE_1051"/>
<dbReference type="eggNOG" id="COG0198">
    <property type="taxonomic scope" value="Bacteria"/>
</dbReference>
<dbReference type="HOGENOM" id="CLU_093315_2_0_5"/>
<dbReference type="OrthoDB" id="9807419at2"/>
<dbReference type="Proteomes" id="UP000001951">
    <property type="component" value="Chromosome"/>
</dbReference>
<dbReference type="GO" id="GO:1990904">
    <property type="term" value="C:ribonucleoprotein complex"/>
    <property type="evidence" value="ECO:0007669"/>
    <property type="project" value="UniProtKB-KW"/>
</dbReference>
<dbReference type="GO" id="GO:0005840">
    <property type="term" value="C:ribosome"/>
    <property type="evidence" value="ECO:0007669"/>
    <property type="project" value="UniProtKB-KW"/>
</dbReference>
<dbReference type="GO" id="GO:0019843">
    <property type="term" value="F:rRNA binding"/>
    <property type="evidence" value="ECO:0007669"/>
    <property type="project" value="UniProtKB-UniRule"/>
</dbReference>
<dbReference type="GO" id="GO:0003735">
    <property type="term" value="F:structural constituent of ribosome"/>
    <property type="evidence" value="ECO:0007669"/>
    <property type="project" value="InterPro"/>
</dbReference>
<dbReference type="GO" id="GO:0006412">
    <property type="term" value="P:translation"/>
    <property type="evidence" value="ECO:0007669"/>
    <property type="project" value="UniProtKB-UniRule"/>
</dbReference>
<dbReference type="CDD" id="cd06089">
    <property type="entry name" value="KOW_RPL26"/>
    <property type="match status" value="1"/>
</dbReference>
<dbReference type="FunFam" id="2.30.30.30:FF:000004">
    <property type="entry name" value="50S ribosomal protein L24"/>
    <property type="match status" value="1"/>
</dbReference>
<dbReference type="Gene3D" id="2.30.30.30">
    <property type="match status" value="1"/>
</dbReference>
<dbReference type="HAMAP" id="MF_01326_B">
    <property type="entry name" value="Ribosomal_uL24_B"/>
    <property type="match status" value="1"/>
</dbReference>
<dbReference type="InterPro" id="IPR005824">
    <property type="entry name" value="KOW"/>
</dbReference>
<dbReference type="InterPro" id="IPR014722">
    <property type="entry name" value="Rib_uL2_dom2"/>
</dbReference>
<dbReference type="InterPro" id="IPR003256">
    <property type="entry name" value="Ribosomal_uL24"/>
</dbReference>
<dbReference type="InterPro" id="IPR005825">
    <property type="entry name" value="Ribosomal_uL24_CS"/>
</dbReference>
<dbReference type="InterPro" id="IPR041988">
    <property type="entry name" value="Ribosomal_uL24_KOW"/>
</dbReference>
<dbReference type="InterPro" id="IPR008991">
    <property type="entry name" value="Translation_prot_SH3-like_sf"/>
</dbReference>
<dbReference type="NCBIfam" id="TIGR01079">
    <property type="entry name" value="rplX_bact"/>
    <property type="match status" value="1"/>
</dbReference>
<dbReference type="PANTHER" id="PTHR12903">
    <property type="entry name" value="MITOCHONDRIAL RIBOSOMAL PROTEIN L24"/>
    <property type="match status" value="1"/>
</dbReference>
<dbReference type="Pfam" id="PF00467">
    <property type="entry name" value="KOW"/>
    <property type="match status" value="1"/>
</dbReference>
<dbReference type="Pfam" id="PF17136">
    <property type="entry name" value="ribosomal_L24"/>
    <property type="match status" value="1"/>
</dbReference>
<dbReference type="SMART" id="SM00739">
    <property type="entry name" value="KOW"/>
    <property type="match status" value="1"/>
</dbReference>
<dbReference type="SUPFAM" id="SSF50104">
    <property type="entry name" value="Translation proteins SH3-like domain"/>
    <property type="match status" value="1"/>
</dbReference>
<dbReference type="PROSITE" id="PS01108">
    <property type="entry name" value="RIBOSOMAL_L24"/>
    <property type="match status" value="1"/>
</dbReference>
<organism>
    <name type="scientific">Rickettsia bellii (strain RML369-C)</name>
    <dbReference type="NCBI Taxonomy" id="336407"/>
    <lineage>
        <taxon>Bacteria</taxon>
        <taxon>Pseudomonadati</taxon>
        <taxon>Pseudomonadota</taxon>
        <taxon>Alphaproteobacteria</taxon>
        <taxon>Rickettsiales</taxon>
        <taxon>Rickettsiaceae</taxon>
        <taxon>Rickettsieae</taxon>
        <taxon>Rickettsia</taxon>
        <taxon>belli group</taxon>
    </lineage>
</organism>
<keyword id="KW-0687">Ribonucleoprotein</keyword>
<keyword id="KW-0689">Ribosomal protein</keyword>
<keyword id="KW-0694">RNA-binding</keyword>
<keyword id="KW-0699">rRNA-binding</keyword>